<proteinExistence type="inferred from homology"/>
<reference key="1">
    <citation type="submission" date="2008-10" db="EMBL/GenBank/DDBJ databases">
        <title>Buthus occitanus israelis scorpion toxin.</title>
        <authorList>
            <person name="Zilberberg N."/>
            <person name="Kozminsky-Atias A."/>
        </authorList>
    </citation>
    <scope>NUCLEOTIDE SEQUENCE [MRNA]</scope>
</reference>
<dbReference type="EMBL" id="FJ360787">
    <property type="protein sequence ID" value="ACJ23107.1"/>
    <property type="molecule type" value="mRNA"/>
</dbReference>
<dbReference type="GO" id="GO:0005576">
    <property type="term" value="C:extracellular region"/>
    <property type="evidence" value="ECO:0007669"/>
    <property type="project" value="UniProtKB-SubCell"/>
</dbReference>
<dbReference type="GO" id="GO:0008200">
    <property type="term" value="F:ion channel inhibitor activity"/>
    <property type="evidence" value="ECO:0007669"/>
    <property type="project" value="InterPro"/>
</dbReference>
<dbReference type="GO" id="GO:0015459">
    <property type="term" value="F:potassium channel regulator activity"/>
    <property type="evidence" value="ECO:0007669"/>
    <property type="project" value="UniProtKB-KW"/>
</dbReference>
<dbReference type="GO" id="GO:0017080">
    <property type="term" value="F:sodium channel regulator activity"/>
    <property type="evidence" value="ECO:0007669"/>
    <property type="project" value="UniProtKB-KW"/>
</dbReference>
<dbReference type="GO" id="GO:0090729">
    <property type="term" value="F:toxin activity"/>
    <property type="evidence" value="ECO:0007669"/>
    <property type="project" value="UniProtKB-KW"/>
</dbReference>
<dbReference type="Gene3D" id="3.30.30.10">
    <property type="entry name" value="Knottin, scorpion toxin-like"/>
    <property type="match status" value="1"/>
</dbReference>
<dbReference type="InterPro" id="IPR044062">
    <property type="entry name" value="LCN-type_CS_alpha_beta_dom"/>
</dbReference>
<dbReference type="InterPro" id="IPR036574">
    <property type="entry name" value="Scorpion_toxin-like_sf"/>
</dbReference>
<dbReference type="SUPFAM" id="SSF57095">
    <property type="entry name" value="Scorpion toxin-like"/>
    <property type="match status" value="1"/>
</dbReference>
<dbReference type="PROSITE" id="PS51863">
    <property type="entry name" value="LCN_CSAB"/>
    <property type="match status" value="1"/>
</dbReference>
<accession>B8XGZ8</accession>
<name>LV1B_BUTIS</name>
<protein>
    <recommendedName>
        <fullName>Lipolysis-activating peptide 1-beta chain</fullName>
        <shortName>BoiLVP1-beta</shortName>
        <shortName>LVP1-beta</shortName>
    </recommendedName>
    <alternativeName>
        <fullName>Putative beta-like toxin Tx457</fullName>
    </alternativeName>
</protein>
<feature type="signal peptide" evidence="5">
    <location>
        <begin position="1"/>
        <end position="22"/>
    </location>
</feature>
<feature type="chain" id="PRO_0000394869" description="Lipolysis-activating peptide 1-beta chain">
    <location>
        <begin position="23"/>
        <end position="98"/>
    </location>
</feature>
<feature type="domain" description="LCN-type CS-alpha/beta" evidence="6">
    <location>
        <begin position="23"/>
        <end position="91"/>
    </location>
</feature>
<feature type="site" description="Important for blocking potassium channels" evidence="1">
    <location>
        <position position="44"/>
    </location>
</feature>
<feature type="site" description="Important for blocking potassium channels" evidence="1">
    <location>
        <position position="47"/>
    </location>
</feature>
<feature type="disulfide bond" evidence="2">
    <location>
        <begin position="37"/>
        <end position="60"/>
    </location>
</feature>
<feature type="disulfide bond" evidence="2">
    <location>
        <begin position="45"/>
        <end position="70"/>
    </location>
</feature>
<feature type="disulfide bond" evidence="2">
    <location>
        <begin position="49"/>
        <end position="72"/>
    </location>
</feature>
<feature type="disulfide bond" description="Interchain (with C-88 in BoiLVP1 chain alpha)" evidence="1">
    <location>
        <position position="90"/>
    </location>
</feature>
<sequence length="98" mass="11203">MANVQVIFVAYIAVIAFSMVYGDDYKPFGEHNSYYGCKKQTDEFCNKICKLHLAKKGGFCHQPAPFVELCKCLDIDYDNTYFLKAMEKQCPKLKGNVN</sequence>
<evidence type="ECO:0000250" key="1"/>
<evidence type="ECO:0000250" key="2">
    <source>
        <dbReference type="UniProtKB" id="P01493"/>
    </source>
</evidence>
<evidence type="ECO:0000250" key="3">
    <source>
        <dbReference type="UniProtKB" id="P84809"/>
    </source>
</evidence>
<evidence type="ECO:0000250" key="4">
    <source>
        <dbReference type="UniProtKB" id="Q95P90"/>
    </source>
</evidence>
<evidence type="ECO:0000255" key="5"/>
<evidence type="ECO:0000255" key="6">
    <source>
        <dbReference type="PROSITE-ProRule" id="PRU01210"/>
    </source>
</evidence>
<evidence type="ECO:0000305" key="7"/>
<evidence type="ECO:0000305" key="8">
    <source ref="1"/>
</evidence>
<keyword id="KW-1015">Disulfide bond</keyword>
<keyword id="KW-1213">G-protein coupled receptor impairing toxin</keyword>
<keyword id="KW-0872">Ion channel impairing toxin</keyword>
<keyword id="KW-0528">Neurotoxin</keyword>
<keyword id="KW-0632">Potassium channel impairing toxin</keyword>
<keyword id="KW-0691">RNA editing</keyword>
<keyword id="KW-0964">Secreted</keyword>
<keyword id="KW-0732">Signal</keyword>
<keyword id="KW-0800">Toxin</keyword>
<keyword id="KW-1220">Voltage-gated potassium channel impairing toxin</keyword>
<keyword id="KW-0738">Voltage-gated sodium channel impairing toxin</keyword>
<comment type="function">
    <text evidence="1">The homodimer inhibits HMG-CoA reductase (HMGCR) (32% of inhibition produced by 0.6 uM), a glycoprotein involved in the control of cholesterol biosynthesis. The inhibitory effects of bumarsin are seen at much lower concentrations (0.6 uM) than that for statins such as atorvastatin (5 mM) and simvastatin (10 uM). In addition to inhibition of HMG-CoA reductase, this protein lowers cholesterol levels by inducing steroid hormone synthesis via StAR, and by increasing reverse cholesterol transport mediated by the induction of ABCA1 and APOA1 (By similarity).</text>
</comment>
<comment type="function">
    <text evidence="3">The heterodimer non-edited LVP1 induces lipolysis in rat adipocytes. Induction of lipolysis by LVP1 appears to be mediated through the beta-2 adrenergic receptor pathway (ADRB2) (By similarity).</text>
</comment>
<comment type="function">
    <text evidence="7">The monomer edited version, similar to alpha-toxins, may modulate voltage-gated sodium channels (Nav) and may block voltage-gated potassium channels (Kv).</text>
</comment>
<comment type="subunit">
    <text evidence="4">Homodimer; disulfide-linked or monomer (edited version) or heterodimer of an alpha chain (AC B8XH01) and this beta chain (non-edited version).</text>
</comment>
<comment type="subcellular location">
    <subcellularLocation>
        <location evidence="4">Secreted</location>
    </subcellularLocation>
</comment>
<comment type="tissue specificity">
    <text evidence="8">Expressed by the venom gland.</text>
</comment>
<comment type="domain">
    <text evidence="7">Has the structural arrangement of an alpha-helix connected to antiparallel beta-sheets by disulfide bonds (CS-alpha/beta).</text>
</comment>
<comment type="RNA editing">
    <location>
        <position position="34" evidence="1"/>
    </location>
    <text evidence="1">Partially edited. RNA editing at this position consists of an insertion of three nucleotides, restoring the first Cys residue that forms a disulfide bond with Cys-90, giving a monomeric toxin with 4 disulfide bonds (By similarity).</text>
</comment>
<comment type="similarity">
    <text evidence="7">Belongs to the long (3 C-C) scorpion toxin superfamily.</text>
</comment>
<organism>
    <name type="scientific">Buthus israelis</name>
    <name type="common">Israeli scorpion</name>
    <name type="synonym">Buthus occitanus israelis</name>
    <dbReference type="NCBI Taxonomy" id="2899555"/>
    <lineage>
        <taxon>Eukaryota</taxon>
        <taxon>Metazoa</taxon>
        <taxon>Ecdysozoa</taxon>
        <taxon>Arthropoda</taxon>
        <taxon>Chelicerata</taxon>
        <taxon>Arachnida</taxon>
        <taxon>Scorpiones</taxon>
        <taxon>Buthida</taxon>
        <taxon>Buthoidea</taxon>
        <taxon>Buthidae</taxon>
        <taxon>Buthus</taxon>
    </lineage>
</organism>